<dbReference type="EMBL" id="CP000510">
    <property type="protein sequence ID" value="ABM05294.1"/>
    <property type="molecule type" value="Genomic_DNA"/>
</dbReference>
<dbReference type="RefSeq" id="WP_011771842.1">
    <property type="nucleotide sequence ID" value="NC_008709.1"/>
</dbReference>
<dbReference type="SMR" id="A1T0M9"/>
<dbReference type="STRING" id="357804.Ping_3611"/>
<dbReference type="KEGG" id="pin:Ping_3611"/>
<dbReference type="eggNOG" id="COG0706">
    <property type="taxonomic scope" value="Bacteria"/>
</dbReference>
<dbReference type="HOGENOM" id="CLU_016535_3_0_6"/>
<dbReference type="OrthoDB" id="9780552at2"/>
<dbReference type="Proteomes" id="UP000000639">
    <property type="component" value="Chromosome"/>
</dbReference>
<dbReference type="GO" id="GO:0005886">
    <property type="term" value="C:plasma membrane"/>
    <property type="evidence" value="ECO:0007669"/>
    <property type="project" value="UniProtKB-SubCell"/>
</dbReference>
<dbReference type="GO" id="GO:0032977">
    <property type="term" value="F:membrane insertase activity"/>
    <property type="evidence" value="ECO:0007669"/>
    <property type="project" value="InterPro"/>
</dbReference>
<dbReference type="GO" id="GO:0051205">
    <property type="term" value="P:protein insertion into membrane"/>
    <property type="evidence" value="ECO:0007669"/>
    <property type="project" value="TreeGrafter"/>
</dbReference>
<dbReference type="GO" id="GO:0015031">
    <property type="term" value="P:protein transport"/>
    <property type="evidence" value="ECO:0007669"/>
    <property type="project" value="UniProtKB-KW"/>
</dbReference>
<dbReference type="CDD" id="cd20070">
    <property type="entry name" value="5TM_YidC_Alb3"/>
    <property type="match status" value="1"/>
</dbReference>
<dbReference type="CDD" id="cd19961">
    <property type="entry name" value="EcYidC-like_peri"/>
    <property type="match status" value="1"/>
</dbReference>
<dbReference type="Gene3D" id="2.70.98.90">
    <property type="match status" value="1"/>
</dbReference>
<dbReference type="HAMAP" id="MF_01810">
    <property type="entry name" value="YidC_type1"/>
    <property type="match status" value="1"/>
</dbReference>
<dbReference type="InterPro" id="IPR019998">
    <property type="entry name" value="Membr_insert_YidC"/>
</dbReference>
<dbReference type="InterPro" id="IPR028053">
    <property type="entry name" value="Membr_insert_YidC_N"/>
</dbReference>
<dbReference type="InterPro" id="IPR001708">
    <property type="entry name" value="YidC/ALB3/OXA1/COX18"/>
</dbReference>
<dbReference type="InterPro" id="IPR028055">
    <property type="entry name" value="YidC/Oxa/ALB_C"/>
</dbReference>
<dbReference type="InterPro" id="IPR047196">
    <property type="entry name" value="YidC_ALB_C"/>
</dbReference>
<dbReference type="InterPro" id="IPR038221">
    <property type="entry name" value="YidC_periplasmic_sf"/>
</dbReference>
<dbReference type="NCBIfam" id="NF002351">
    <property type="entry name" value="PRK01318.1-1"/>
    <property type="match status" value="1"/>
</dbReference>
<dbReference type="NCBIfam" id="NF002352">
    <property type="entry name" value="PRK01318.1-3"/>
    <property type="match status" value="1"/>
</dbReference>
<dbReference type="NCBIfam" id="NF002353">
    <property type="entry name" value="PRK01318.1-4"/>
    <property type="match status" value="1"/>
</dbReference>
<dbReference type="NCBIfam" id="TIGR03593">
    <property type="entry name" value="yidC_nterm"/>
    <property type="match status" value="1"/>
</dbReference>
<dbReference type="NCBIfam" id="TIGR03592">
    <property type="entry name" value="yidC_oxa1_cterm"/>
    <property type="match status" value="1"/>
</dbReference>
<dbReference type="PANTHER" id="PTHR12428:SF65">
    <property type="entry name" value="CYTOCHROME C OXIDASE ASSEMBLY PROTEIN COX18, MITOCHONDRIAL"/>
    <property type="match status" value="1"/>
</dbReference>
<dbReference type="PANTHER" id="PTHR12428">
    <property type="entry name" value="OXA1"/>
    <property type="match status" value="1"/>
</dbReference>
<dbReference type="Pfam" id="PF02096">
    <property type="entry name" value="60KD_IMP"/>
    <property type="match status" value="1"/>
</dbReference>
<dbReference type="Pfam" id="PF14849">
    <property type="entry name" value="YidC_periplas"/>
    <property type="match status" value="1"/>
</dbReference>
<dbReference type="PRINTS" id="PR00701">
    <property type="entry name" value="60KDINNERMP"/>
</dbReference>
<dbReference type="PRINTS" id="PR01900">
    <property type="entry name" value="YIDCPROTEIN"/>
</dbReference>
<sequence length="566" mass="63545">MESQRNLLLLALLFVSFLLYTAWVEEKTPQVAPQVQTEQVDSSVPASVASSANSANLSDGVPNSPQQSSTDATSTELPASQSVTIANDELRLTISLVGGDIIKADLLQHDATLDSDTPYRLLDSGNGFTYIAQSGLIGQGPDANKNGRPLYDTTDTESVLADGQAEVSTMLHFVDADGNIFIKTFTLKRGEYVTNVAYQIENKTDSPLNVQLYAQLRETLSDDSGSMVMPVYRGGAFSTTETRYEKYSFSDMQDGPLQKTTEGGWVAMLQHYFVSAWIPSPTDQNVLYSNIIQDKEAAIGFKAPSKTIAPQSVAELETNLWVGPKIQEEMALVAKNLDLTVDYGWLWFIAQPLFKLLLFFQGIVGNWGVAIILITFTVKGALYPLTKAQYTSMAKMRLLQPKIKELREQFGEDRQKVSKAMMELYKKEKVNPLGGCFPILLQMPIFIALYWSLMESVELRHAPFMLWIQDLSVQDPYYILPILMGVSMFFIQKMSPTTVQDPMQQKVMQFMPVIFTFFFLWFPAGLVLYWLMSNVVTLIQQTLIYRSFEKKGLHQKEKEPVVLTKK</sequence>
<comment type="function">
    <text evidence="1">Required for the insertion and/or proper folding and/or complex formation of integral membrane proteins into the membrane. Involved in integration of membrane proteins that insert both dependently and independently of the Sec translocase complex, as well as at least some lipoproteins. Aids folding of multispanning membrane proteins.</text>
</comment>
<comment type="subunit">
    <text evidence="1">Interacts with the Sec translocase complex via SecD. Specifically interacts with transmembrane segments of nascent integral membrane proteins during membrane integration.</text>
</comment>
<comment type="subcellular location">
    <subcellularLocation>
        <location evidence="1">Cell inner membrane</location>
        <topology evidence="1">Multi-pass membrane protein</topology>
    </subcellularLocation>
</comment>
<comment type="similarity">
    <text evidence="1">Belongs to the OXA1/ALB3/YidC family. Type 1 subfamily.</text>
</comment>
<gene>
    <name evidence="1" type="primary">yidC</name>
    <name type="ordered locus">Ping_3611</name>
</gene>
<evidence type="ECO:0000255" key="1">
    <source>
        <dbReference type="HAMAP-Rule" id="MF_01810"/>
    </source>
</evidence>
<evidence type="ECO:0000256" key="2">
    <source>
        <dbReference type="SAM" id="MobiDB-lite"/>
    </source>
</evidence>
<proteinExistence type="inferred from homology"/>
<feature type="chain" id="PRO_1000070147" description="Membrane protein insertase YidC">
    <location>
        <begin position="1"/>
        <end position="566"/>
    </location>
</feature>
<feature type="transmembrane region" description="Helical" evidence="1">
    <location>
        <begin position="6"/>
        <end position="26"/>
    </location>
</feature>
<feature type="transmembrane region" description="Helical" evidence="1">
    <location>
        <begin position="356"/>
        <end position="376"/>
    </location>
</feature>
<feature type="transmembrane region" description="Helical" evidence="1">
    <location>
        <begin position="433"/>
        <end position="453"/>
    </location>
</feature>
<feature type="transmembrane region" description="Helical" evidence="1">
    <location>
        <begin position="471"/>
        <end position="491"/>
    </location>
</feature>
<feature type="transmembrane region" description="Helical" evidence="1">
    <location>
        <begin position="510"/>
        <end position="530"/>
    </location>
</feature>
<feature type="region of interest" description="Disordered" evidence="2">
    <location>
        <begin position="30"/>
        <end position="80"/>
    </location>
</feature>
<feature type="compositionally biased region" description="Polar residues" evidence="2">
    <location>
        <begin position="31"/>
        <end position="41"/>
    </location>
</feature>
<feature type="compositionally biased region" description="Low complexity" evidence="2">
    <location>
        <begin position="42"/>
        <end position="58"/>
    </location>
</feature>
<feature type="compositionally biased region" description="Polar residues" evidence="2">
    <location>
        <begin position="61"/>
        <end position="80"/>
    </location>
</feature>
<protein>
    <recommendedName>
        <fullName evidence="1">Membrane protein insertase YidC</fullName>
    </recommendedName>
    <alternativeName>
        <fullName evidence="1">Foldase YidC</fullName>
    </alternativeName>
    <alternativeName>
        <fullName evidence="1">Membrane integrase YidC</fullName>
    </alternativeName>
    <alternativeName>
        <fullName evidence="1">Membrane protein YidC</fullName>
    </alternativeName>
</protein>
<name>YIDC_PSYIN</name>
<reference key="1">
    <citation type="journal article" date="2008" name="BMC Genomics">
        <title>Genomics of an extreme psychrophile, Psychromonas ingrahamii.</title>
        <authorList>
            <person name="Riley M."/>
            <person name="Staley J.T."/>
            <person name="Danchin A."/>
            <person name="Wang T.Z."/>
            <person name="Brettin T.S."/>
            <person name="Hauser L.J."/>
            <person name="Land M.L."/>
            <person name="Thompson L.S."/>
        </authorList>
    </citation>
    <scope>NUCLEOTIDE SEQUENCE [LARGE SCALE GENOMIC DNA]</scope>
    <source>
        <strain>DSM 17664 / CCUG 51855 / 37</strain>
    </source>
</reference>
<organism>
    <name type="scientific">Psychromonas ingrahamii (strain DSM 17664 / CCUG 51855 / 37)</name>
    <dbReference type="NCBI Taxonomy" id="357804"/>
    <lineage>
        <taxon>Bacteria</taxon>
        <taxon>Pseudomonadati</taxon>
        <taxon>Pseudomonadota</taxon>
        <taxon>Gammaproteobacteria</taxon>
        <taxon>Alteromonadales</taxon>
        <taxon>Psychromonadaceae</taxon>
        <taxon>Psychromonas</taxon>
    </lineage>
</organism>
<accession>A1T0M9</accession>
<keyword id="KW-0997">Cell inner membrane</keyword>
<keyword id="KW-1003">Cell membrane</keyword>
<keyword id="KW-0143">Chaperone</keyword>
<keyword id="KW-0472">Membrane</keyword>
<keyword id="KW-0653">Protein transport</keyword>
<keyword id="KW-1185">Reference proteome</keyword>
<keyword id="KW-0812">Transmembrane</keyword>
<keyword id="KW-1133">Transmembrane helix</keyword>
<keyword id="KW-0813">Transport</keyword>